<reference key="1">
    <citation type="journal article" date="2005" name="J. Bacteriol.">
        <title>Genomic sequence of an otitis media isolate of nontypeable Haemophilus influenzae: comparative study with H. influenzae serotype d, strain KW20.</title>
        <authorList>
            <person name="Harrison A."/>
            <person name="Dyer D.W."/>
            <person name="Gillaspy A."/>
            <person name="Ray W.C."/>
            <person name="Mungur R."/>
            <person name="Carson M.B."/>
            <person name="Zhong H."/>
            <person name="Gipson J."/>
            <person name="Gipson M."/>
            <person name="Johnson L.S."/>
            <person name="Lewis L."/>
            <person name="Bakaletz L.O."/>
            <person name="Munson R.S. Jr."/>
        </authorList>
    </citation>
    <scope>NUCLEOTIDE SEQUENCE [LARGE SCALE GENOMIC DNA]</scope>
    <source>
        <strain>86-028NP</strain>
    </source>
</reference>
<proteinExistence type="inferred from homology"/>
<organism>
    <name type="scientific">Haemophilus influenzae (strain 86-028NP)</name>
    <dbReference type="NCBI Taxonomy" id="281310"/>
    <lineage>
        <taxon>Bacteria</taxon>
        <taxon>Pseudomonadati</taxon>
        <taxon>Pseudomonadota</taxon>
        <taxon>Gammaproteobacteria</taxon>
        <taxon>Pasteurellales</taxon>
        <taxon>Pasteurellaceae</taxon>
        <taxon>Haemophilus</taxon>
    </lineage>
</organism>
<gene>
    <name evidence="1" type="primary">truB</name>
    <name type="ordered locus">NTHI1834</name>
</gene>
<feature type="chain" id="PRO_0000229359" description="tRNA pseudouridine synthase B">
    <location>
        <begin position="1"/>
        <end position="306"/>
    </location>
</feature>
<feature type="active site" description="Nucleophile" evidence="1">
    <location>
        <position position="48"/>
    </location>
</feature>
<accession>Q4QK43</accession>
<protein>
    <recommendedName>
        <fullName evidence="1">tRNA pseudouridine synthase B</fullName>
        <ecNumber evidence="1">5.4.99.25</ecNumber>
    </recommendedName>
    <alternativeName>
        <fullName evidence="1">tRNA pseudouridine(55) synthase</fullName>
        <shortName evidence="1">Psi55 synthase</shortName>
    </alternativeName>
    <alternativeName>
        <fullName evidence="1">tRNA pseudouridylate synthase</fullName>
    </alternativeName>
    <alternativeName>
        <fullName evidence="1">tRNA-uridine isomerase</fullName>
    </alternativeName>
</protein>
<keyword id="KW-0413">Isomerase</keyword>
<keyword id="KW-0819">tRNA processing</keyword>
<evidence type="ECO:0000255" key="1">
    <source>
        <dbReference type="HAMAP-Rule" id="MF_01080"/>
    </source>
</evidence>
<sequence length="306" mass="34113">MSRPRKRWRDVDGVFLLDKPQGMSSNDIMQKVKRLFQANKAGHTGALDPLATGMLPICLGEATKFSQFLLDADKRYLVTAKLGERTDTSDAEGQVVETREVHVETPQILTALEQFRGDILQVPTMFSALKHNGKPLYEYARQGITVEREARPITIFELNFIEYHAPFLTLEVHCSKGTYIRTLVDDLGEVLGCGAHVTMLRRTAVADYPVAEMIPINELQLLAESFPLSELDRLLLPTDTAVSKLPALHLDVEQSKAIGFGQRVKFANEQQLGGQVRLFSAENLFLGVALIDGNIIRPQRLITQSA</sequence>
<dbReference type="EC" id="5.4.99.25" evidence="1"/>
<dbReference type="EMBL" id="CP000057">
    <property type="protein sequence ID" value="AAX88604.1"/>
    <property type="molecule type" value="Genomic_DNA"/>
</dbReference>
<dbReference type="RefSeq" id="WP_011272658.1">
    <property type="nucleotide sequence ID" value="NC_007146.2"/>
</dbReference>
<dbReference type="SMR" id="Q4QK43"/>
<dbReference type="KEGG" id="hit:NTHI1834"/>
<dbReference type="HOGENOM" id="CLU_032087_0_3_6"/>
<dbReference type="Proteomes" id="UP000002525">
    <property type="component" value="Chromosome"/>
</dbReference>
<dbReference type="GO" id="GO:0003723">
    <property type="term" value="F:RNA binding"/>
    <property type="evidence" value="ECO:0007669"/>
    <property type="project" value="InterPro"/>
</dbReference>
<dbReference type="GO" id="GO:0160148">
    <property type="term" value="F:tRNA pseudouridine(55) synthase activity"/>
    <property type="evidence" value="ECO:0007669"/>
    <property type="project" value="UniProtKB-EC"/>
</dbReference>
<dbReference type="GO" id="GO:1990481">
    <property type="term" value="P:mRNA pseudouridine synthesis"/>
    <property type="evidence" value="ECO:0007669"/>
    <property type="project" value="TreeGrafter"/>
</dbReference>
<dbReference type="GO" id="GO:0031119">
    <property type="term" value="P:tRNA pseudouridine synthesis"/>
    <property type="evidence" value="ECO:0007669"/>
    <property type="project" value="UniProtKB-UniRule"/>
</dbReference>
<dbReference type="CDD" id="cd02573">
    <property type="entry name" value="PseudoU_synth_EcTruB"/>
    <property type="match status" value="1"/>
</dbReference>
<dbReference type="CDD" id="cd21152">
    <property type="entry name" value="PUA_TruB_bacterial"/>
    <property type="match status" value="1"/>
</dbReference>
<dbReference type="FunFam" id="3.30.2350.10:FF:000003">
    <property type="entry name" value="tRNA pseudouridine synthase B"/>
    <property type="match status" value="1"/>
</dbReference>
<dbReference type="Gene3D" id="3.30.2350.10">
    <property type="entry name" value="Pseudouridine synthase"/>
    <property type="match status" value="1"/>
</dbReference>
<dbReference type="Gene3D" id="2.30.130.10">
    <property type="entry name" value="PUA domain"/>
    <property type="match status" value="1"/>
</dbReference>
<dbReference type="HAMAP" id="MF_01080">
    <property type="entry name" value="TruB_bact"/>
    <property type="match status" value="1"/>
</dbReference>
<dbReference type="InterPro" id="IPR020103">
    <property type="entry name" value="PsdUridine_synth_cat_dom_sf"/>
</dbReference>
<dbReference type="InterPro" id="IPR002501">
    <property type="entry name" value="PsdUridine_synth_N"/>
</dbReference>
<dbReference type="InterPro" id="IPR015947">
    <property type="entry name" value="PUA-like_sf"/>
</dbReference>
<dbReference type="InterPro" id="IPR036974">
    <property type="entry name" value="PUA_sf"/>
</dbReference>
<dbReference type="InterPro" id="IPR014780">
    <property type="entry name" value="tRNA_psdUridine_synth_TruB"/>
</dbReference>
<dbReference type="InterPro" id="IPR015240">
    <property type="entry name" value="tRNA_sdUridine_synth_fam1_C"/>
</dbReference>
<dbReference type="InterPro" id="IPR032819">
    <property type="entry name" value="TruB_C"/>
</dbReference>
<dbReference type="NCBIfam" id="TIGR00431">
    <property type="entry name" value="TruB"/>
    <property type="match status" value="1"/>
</dbReference>
<dbReference type="PANTHER" id="PTHR13767:SF2">
    <property type="entry name" value="PSEUDOURIDYLATE SYNTHASE TRUB1"/>
    <property type="match status" value="1"/>
</dbReference>
<dbReference type="PANTHER" id="PTHR13767">
    <property type="entry name" value="TRNA-PSEUDOURIDINE SYNTHASE"/>
    <property type="match status" value="1"/>
</dbReference>
<dbReference type="Pfam" id="PF09157">
    <property type="entry name" value="TruB-C_2"/>
    <property type="match status" value="1"/>
</dbReference>
<dbReference type="Pfam" id="PF16198">
    <property type="entry name" value="TruB_C_2"/>
    <property type="match status" value="1"/>
</dbReference>
<dbReference type="Pfam" id="PF01509">
    <property type="entry name" value="TruB_N"/>
    <property type="match status" value="1"/>
</dbReference>
<dbReference type="SUPFAM" id="SSF55120">
    <property type="entry name" value="Pseudouridine synthase"/>
    <property type="match status" value="1"/>
</dbReference>
<dbReference type="SUPFAM" id="SSF88697">
    <property type="entry name" value="PUA domain-like"/>
    <property type="match status" value="1"/>
</dbReference>
<comment type="function">
    <text evidence="1">Responsible for synthesis of pseudouridine from uracil-55 in the psi GC loop of transfer RNAs.</text>
</comment>
<comment type="catalytic activity">
    <reaction evidence="1">
        <text>uridine(55) in tRNA = pseudouridine(55) in tRNA</text>
        <dbReference type="Rhea" id="RHEA:42532"/>
        <dbReference type="Rhea" id="RHEA-COMP:10101"/>
        <dbReference type="Rhea" id="RHEA-COMP:10102"/>
        <dbReference type="ChEBI" id="CHEBI:65314"/>
        <dbReference type="ChEBI" id="CHEBI:65315"/>
        <dbReference type="EC" id="5.4.99.25"/>
    </reaction>
</comment>
<comment type="similarity">
    <text evidence="1">Belongs to the pseudouridine synthase TruB family. Type 1 subfamily.</text>
</comment>
<name>TRUB_HAEI8</name>